<proteinExistence type="evidence at protein level"/>
<evidence type="ECO:0000250" key="1"/>
<evidence type="ECO:0000250" key="2">
    <source>
        <dbReference type="UniProtKB" id="Q9NUL3"/>
    </source>
</evidence>
<evidence type="ECO:0000255" key="3">
    <source>
        <dbReference type="PROSITE-ProRule" id="PRU00266"/>
    </source>
</evidence>
<evidence type="ECO:0000256" key="4">
    <source>
        <dbReference type="SAM" id="MobiDB-lite"/>
    </source>
</evidence>
<evidence type="ECO:0000269" key="5">
    <source>
    </source>
</evidence>
<evidence type="ECO:0000269" key="6">
    <source>
    </source>
</evidence>
<evidence type="ECO:0000269" key="7">
    <source>
    </source>
</evidence>
<evidence type="ECO:0000303" key="8">
    <source>
    </source>
</evidence>
<evidence type="ECO:0000303" key="9">
    <source>
    </source>
</evidence>
<evidence type="ECO:0000303" key="10">
    <source>
    </source>
</evidence>
<evidence type="ECO:0000303" key="11">
    <source>
    </source>
</evidence>
<evidence type="ECO:0000305" key="12"/>
<evidence type="ECO:0007744" key="13">
    <source>
    </source>
</evidence>
<feature type="chain" id="PRO_0000072248" description="Double-stranded RNA-binding protein Staufen homolog 2">
    <location>
        <begin position="1"/>
        <end position="571"/>
    </location>
</feature>
<feature type="domain" description="DRBM 1" evidence="3">
    <location>
        <begin position="8"/>
        <end position="75"/>
    </location>
</feature>
<feature type="domain" description="DRBM 2" evidence="3">
    <location>
        <begin position="95"/>
        <end position="181"/>
    </location>
</feature>
<feature type="domain" description="DRBM 3" evidence="3">
    <location>
        <begin position="207"/>
        <end position="274"/>
    </location>
</feature>
<feature type="domain" description="DRBM 4" evidence="3">
    <location>
        <begin position="307"/>
        <end position="375"/>
    </location>
</feature>
<feature type="region of interest" description="Disordered" evidence="4">
    <location>
        <begin position="71"/>
        <end position="94"/>
    </location>
</feature>
<feature type="region of interest" description="Disordered" evidence="4">
    <location>
        <begin position="178"/>
        <end position="203"/>
    </location>
</feature>
<feature type="region of interest" description="Required for dendritic transport">
    <location>
        <begin position="381"/>
        <end position="571"/>
    </location>
</feature>
<feature type="region of interest" description="Disordered" evidence="4">
    <location>
        <begin position="382"/>
        <end position="413"/>
    </location>
</feature>
<feature type="region of interest" description="Disordered" evidence="4">
    <location>
        <begin position="546"/>
        <end position="571"/>
    </location>
</feature>
<feature type="short sequence motif" description="Nuclear localization signal 1">
    <location>
        <begin position="273"/>
        <end position="317"/>
    </location>
</feature>
<feature type="short sequence motif" description="Nuclear localization signal 2">
    <location>
        <begin position="373"/>
        <end position="412"/>
    </location>
</feature>
<feature type="compositionally biased region" description="Polar residues" evidence="4">
    <location>
        <begin position="83"/>
        <end position="94"/>
    </location>
</feature>
<feature type="compositionally biased region" description="Basic and acidic residues" evidence="4">
    <location>
        <begin position="194"/>
        <end position="203"/>
    </location>
</feature>
<feature type="compositionally biased region" description="Polar residues" evidence="4">
    <location>
        <begin position="552"/>
        <end position="562"/>
    </location>
</feature>
<feature type="modified residue" description="Phosphoserine" evidence="2">
    <location>
        <position position="188"/>
    </location>
</feature>
<feature type="modified residue" description="Phosphoserine" evidence="2">
    <location>
        <position position="395"/>
    </location>
</feature>
<feature type="modified residue" description="Phosphoserine" evidence="2">
    <location>
        <position position="416"/>
    </location>
</feature>
<feature type="modified residue" description="Phosphoserine" evidence="2">
    <location>
        <position position="426"/>
    </location>
</feature>
<feature type="modified residue" description="Phosphoserine" evidence="2">
    <location>
        <position position="440"/>
    </location>
</feature>
<feature type="modified residue" description="Phosphoserine" evidence="2">
    <location>
        <position position="456"/>
    </location>
</feature>
<feature type="modified residue" description="Phosphoserine" evidence="2">
    <location>
        <position position="493"/>
    </location>
</feature>
<feature type="splice variant" id="VSP_015385" description="In isoform 2 and isoform 3." evidence="9 11">
    <location>
        <begin position="1"/>
        <end position="32"/>
    </location>
</feature>
<feature type="splice variant" id="VSP_015386" description="In isoform 2 and isoform 3." evidence="9 11">
    <original>GPAHSK</original>
    <variation>MLQINQ</variation>
    <location>
        <begin position="33"/>
        <end position="38"/>
    </location>
</feature>
<feature type="splice variant" id="VSP_015387" description="In isoform 3 and isoform 4." evidence="8 9 10 11">
    <original>A</original>
    <variation>V</variation>
    <location>
        <position position="512"/>
    </location>
</feature>
<feature type="splice variant" id="VSP_015388" description="In isoform 3 and isoform 4." evidence="8 9 10 11">
    <location>
        <begin position="513"/>
        <end position="571"/>
    </location>
</feature>
<feature type="mutagenesis site" description="Abrogates CRM1-independent nuclear export." evidence="7">
    <original>F</original>
    <variation>A</variation>
    <location>
        <position position="239"/>
    </location>
</feature>
<feature type="sequence conflict" description="In Ref. 1; AAL89718/AAL89719." evidence="12" ref="1">
    <original>E</original>
    <variation>K</variation>
    <location>
        <position position="339"/>
    </location>
</feature>
<feature type="sequence conflict" description="In Ref. 1; AAL89718." evidence="12" ref="1">
    <original>S</original>
    <variation>F</variation>
    <location>
        <position position="538"/>
    </location>
</feature>
<feature type="modified residue" description="Phosphoserine" evidence="13">
    <location sequence="Q68SB1-2">
        <position position="9"/>
    </location>
</feature>
<feature type="modified residue" description="Phosphoserine" evidence="13">
    <location sequence="Q68SB1-2">
        <position position="13"/>
    </location>
</feature>
<feature type="modified residue" description="Phosphothreonine" evidence="13">
    <location sequence="Q68SB1-2">
        <position position="18"/>
    </location>
</feature>
<feature type="modified residue" description="Phosphoserine" evidence="13">
    <location sequence="Q68SB1-2">
        <position position="21"/>
    </location>
</feature>
<feature type="modified residue" description="Phosphoserine" evidence="13">
    <location sequence="Q68SB1-3">
        <position position="9"/>
    </location>
</feature>
<feature type="modified residue" description="Phosphoserine" evidence="13">
    <location sequence="Q68SB1-3">
        <position position="13"/>
    </location>
</feature>
<feature type="modified residue" description="Phosphothreonine" evidence="13">
    <location sequence="Q68SB1-3">
        <position position="18"/>
    </location>
</feature>
<feature type="modified residue" description="Phosphoserine" evidence="13">
    <location sequence="Q68SB1-3">
        <position position="21"/>
    </location>
</feature>
<dbReference type="EMBL" id="AF483620">
    <property type="protein sequence ID" value="AAL89718.1"/>
    <property type="molecule type" value="mRNA"/>
</dbReference>
<dbReference type="EMBL" id="AF483621">
    <property type="protein sequence ID" value="AAL89719.1"/>
    <property type="molecule type" value="mRNA"/>
</dbReference>
<dbReference type="EMBL" id="AY684789">
    <property type="protein sequence ID" value="AAU21478.1"/>
    <property type="molecule type" value="mRNA"/>
</dbReference>
<dbReference type="EMBL" id="AY684790">
    <property type="protein sequence ID" value="AAU21479.1"/>
    <property type="molecule type" value="mRNA"/>
</dbReference>
<dbReference type="EMBL" id="AY549445">
    <property type="protein sequence ID" value="AAT36670.1"/>
    <property type="molecule type" value="mRNA"/>
</dbReference>
<dbReference type="EMBL" id="AY549446">
    <property type="protein sequence ID" value="AAT36671.1"/>
    <property type="molecule type" value="mRNA"/>
</dbReference>
<dbReference type="EMBL" id="AY549447">
    <property type="protein sequence ID" value="AAT36672.1"/>
    <property type="molecule type" value="mRNA"/>
</dbReference>
<dbReference type="EMBL" id="AY549448">
    <property type="protein sequence ID" value="AAT36673.1"/>
    <property type="molecule type" value="mRNA"/>
</dbReference>
<dbReference type="EMBL" id="BC085705">
    <property type="protein sequence ID" value="AAH85705.1"/>
    <property type="molecule type" value="mRNA"/>
</dbReference>
<dbReference type="RefSeq" id="NP_001007150.2">
    <molecule id="Q68SB1-1"/>
    <property type="nucleotide sequence ID" value="NM_001007149.2"/>
</dbReference>
<dbReference type="RefSeq" id="NP_001007151.1">
    <molecule id="Q68SB1-3"/>
    <property type="nucleotide sequence ID" value="NM_001007150.2"/>
</dbReference>
<dbReference type="RefSeq" id="NP_001380605.1">
    <molecule id="Q68SB1-4"/>
    <property type="nucleotide sequence ID" value="NM_001393676.1"/>
</dbReference>
<dbReference type="RefSeq" id="NP_604461.2">
    <molecule id="Q68SB1-4"/>
    <property type="nucleotide sequence ID" value="NM_134466.4"/>
</dbReference>
<dbReference type="RefSeq" id="XP_063143194.1">
    <molecule id="Q68SB1-1"/>
    <property type="nucleotide sequence ID" value="XM_063287124.1"/>
</dbReference>
<dbReference type="RefSeq" id="XP_063143195.1">
    <molecule id="Q68SB1-2"/>
    <property type="nucleotide sequence ID" value="XM_063287125.1"/>
</dbReference>
<dbReference type="RefSeq" id="XP_063143196.1">
    <molecule id="Q68SB1-2"/>
    <property type="nucleotide sequence ID" value="XM_063287126.1"/>
</dbReference>
<dbReference type="SMR" id="Q68SB1"/>
<dbReference type="BioGRID" id="251277">
    <property type="interactions" value="5"/>
</dbReference>
<dbReference type="CORUM" id="Q68SB1"/>
<dbReference type="FunCoup" id="Q68SB1">
    <property type="interactions" value="3070"/>
</dbReference>
<dbReference type="STRING" id="10116.ENSRNOP00000060092"/>
<dbReference type="GlyGen" id="Q68SB1">
    <property type="glycosylation" value="2 sites"/>
</dbReference>
<dbReference type="iPTMnet" id="Q68SB1"/>
<dbReference type="PhosphoSitePlus" id="Q68SB1"/>
<dbReference type="PaxDb" id="10116-ENSRNOP00000060092"/>
<dbReference type="Ensembl" id="ENSRNOT00000066590.4">
    <molecule id="Q68SB1-4"/>
    <property type="protein sequence ID" value="ENSRNOP00000060092.4"/>
    <property type="gene ID" value="ENSRNOG00000042458.4"/>
</dbReference>
<dbReference type="Ensembl" id="ENSRNOT00000090346.2">
    <molecule id="Q68SB1-3"/>
    <property type="protein sequence ID" value="ENSRNOP00000074008.2"/>
    <property type="gene ID" value="ENSRNOG00000042458.4"/>
</dbReference>
<dbReference type="Ensembl" id="ENSRNOT00000100311.1">
    <molecule id="Q68SB1-2"/>
    <property type="protein sequence ID" value="ENSRNOP00000087673.1"/>
    <property type="gene ID" value="ENSRNOG00000042458.4"/>
</dbReference>
<dbReference type="Ensembl" id="ENSRNOT00000120142.1">
    <molecule id="Q68SB1-1"/>
    <property type="protein sequence ID" value="ENSRNOP00000092247.1"/>
    <property type="gene ID" value="ENSRNOG00000042458.4"/>
</dbReference>
<dbReference type="GeneID" id="171500"/>
<dbReference type="KEGG" id="rno:171500"/>
<dbReference type="UCSC" id="RGD:621479">
    <molecule id="Q68SB1-1"/>
    <property type="organism name" value="rat"/>
</dbReference>
<dbReference type="AGR" id="RGD:621479"/>
<dbReference type="CTD" id="27067"/>
<dbReference type="RGD" id="621479">
    <property type="gene designation" value="Stau2"/>
</dbReference>
<dbReference type="eggNOG" id="KOG3732">
    <property type="taxonomic scope" value="Eukaryota"/>
</dbReference>
<dbReference type="GeneTree" id="ENSGT00940000154977"/>
<dbReference type="InParanoid" id="Q68SB1"/>
<dbReference type="OMA" id="PQNITEM"/>
<dbReference type="PhylomeDB" id="Q68SB1"/>
<dbReference type="PRO" id="PR:Q68SB1"/>
<dbReference type="Proteomes" id="UP000002494">
    <property type="component" value="Chromosome 5"/>
</dbReference>
<dbReference type="GO" id="GO:0030424">
    <property type="term" value="C:axon"/>
    <property type="evidence" value="ECO:0000314"/>
    <property type="project" value="RGD"/>
</dbReference>
<dbReference type="GO" id="GO:0010494">
    <property type="term" value="C:cytoplasmic stress granule"/>
    <property type="evidence" value="ECO:0000314"/>
    <property type="project" value="RGD"/>
</dbReference>
<dbReference type="GO" id="GO:0030425">
    <property type="term" value="C:dendrite"/>
    <property type="evidence" value="ECO:0000314"/>
    <property type="project" value="RGD"/>
</dbReference>
<dbReference type="GO" id="GO:0032839">
    <property type="term" value="C:dendrite cytoplasm"/>
    <property type="evidence" value="ECO:0007669"/>
    <property type="project" value="GOC"/>
</dbReference>
<dbReference type="GO" id="GO:0043198">
    <property type="term" value="C:dendritic shaft"/>
    <property type="evidence" value="ECO:0000314"/>
    <property type="project" value="RGD"/>
</dbReference>
<dbReference type="GO" id="GO:0005783">
    <property type="term" value="C:endoplasmic reticulum"/>
    <property type="evidence" value="ECO:0007669"/>
    <property type="project" value="UniProtKB-SubCell"/>
</dbReference>
<dbReference type="GO" id="GO:0098978">
    <property type="term" value="C:glutamatergic synapse"/>
    <property type="evidence" value="ECO:0000314"/>
    <property type="project" value="SynGO"/>
</dbReference>
<dbReference type="GO" id="GO:0005874">
    <property type="term" value="C:microtubule"/>
    <property type="evidence" value="ECO:0007669"/>
    <property type="project" value="UniProtKB-KW"/>
</dbReference>
<dbReference type="GO" id="GO:0043005">
    <property type="term" value="C:neuron projection"/>
    <property type="evidence" value="ECO:0000318"/>
    <property type="project" value="GO_Central"/>
</dbReference>
<dbReference type="GO" id="GO:0043025">
    <property type="term" value="C:neuronal cell body"/>
    <property type="evidence" value="ECO:0000314"/>
    <property type="project" value="RGD"/>
</dbReference>
<dbReference type="GO" id="GO:0031965">
    <property type="term" value="C:nuclear membrane"/>
    <property type="evidence" value="ECO:0000314"/>
    <property type="project" value="RGD"/>
</dbReference>
<dbReference type="GO" id="GO:0005730">
    <property type="term" value="C:nucleolus"/>
    <property type="evidence" value="ECO:0007669"/>
    <property type="project" value="UniProtKB-SubCell"/>
</dbReference>
<dbReference type="GO" id="GO:0005886">
    <property type="term" value="C:plasma membrane"/>
    <property type="evidence" value="ECO:0000318"/>
    <property type="project" value="GO_Central"/>
</dbReference>
<dbReference type="GO" id="GO:0098794">
    <property type="term" value="C:postsynapse"/>
    <property type="evidence" value="ECO:0000314"/>
    <property type="project" value="SynGO"/>
</dbReference>
<dbReference type="GO" id="GO:0032991">
    <property type="term" value="C:protein-containing complex"/>
    <property type="evidence" value="ECO:0000314"/>
    <property type="project" value="RGD"/>
</dbReference>
<dbReference type="GO" id="GO:0003725">
    <property type="term" value="F:double-stranded RNA binding"/>
    <property type="evidence" value="ECO:0000266"/>
    <property type="project" value="RGD"/>
</dbReference>
<dbReference type="GO" id="GO:0030544">
    <property type="term" value="F:Hsp70 protein binding"/>
    <property type="evidence" value="ECO:0000314"/>
    <property type="project" value="RGD"/>
</dbReference>
<dbReference type="GO" id="GO:0019894">
    <property type="term" value="F:kinesin binding"/>
    <property type="evidence" value="ECO:0000314"/>
    <property type="project" value="RGD"/>
</dbReference>
<dbReference type="GO" id="GO:0051019">
    <property type="term" value="F:mitogen-activated protein kinase binding"/>
    <property type="evidence" value="ECO:0000314"/>
    <property type="project" value="RGD"/>
</dbReference>
<dbReference type="GO" id="GO:0003729">
    <property type="term" value="F:mRNA binding"/>
    <property type="evidence" value="ECO:0000318"/>
    <property type="project" value="GO_Central"/>
</dbReference>
<dbReference type="GO" id="GO:0043022">
    <property type="term" value="F:ribosome binding"/>
    <property type="evidence" value="ECO:0000314"/>
    <property type="project" value="RGD"/>
</dbReference>
<dbReference type="GO" id="GO:0098964">
    <property type="term" value="P:anterograde dendritic transport of messenger ribonucleoprotein complex"/>
    <property type="evidence" value="ECO:0000314"/>
    <property type="project" value="SynGO"/>
</dbReference>
<dbReference type="GO" id="GO:0034599">
    <property type="term" value="P:cellular response to oxidative stress"/>
    <property type="evidence" value="ECO:0000270"/>
    <property type="project" value="RGD"/>
</dbReference>
<dbReference type="GO" id="GO:0048592">
    <property type="term" value="P:eye morphogenesis"/>
    <property type="evidence" value="ECO:0000315"/>
    <property type="project" value="RGD"/>
</dbReference>
<dbReference type="GO" id="GO:0007281">
    <property type="term" value="P:germ cell development"/>
    <property type="evidence" value="ECO:0000318"/>
    <property type="project" value="GO_Central"/>
</dbReference>
<dbReference type="GO" id="GO:0008298">
    <property type="term" value="P:intracellular mRNA localization"/>
    <property type="evidence" value="ECO:0000318"/>
    <property type="project" value="GO_Central"/>
</dbReference>
<dbReference type="GO" id="GO:0061003">
    <property type="term" value="P:positive regulation of dendritic spine morphogenesis"/>
    <property type="evidence" value="ECO:0000315"/>
    <property type="project" value="RGD"/>
</dbReference>
<dbReference type="GO" id="GO:1900454">
    <property type="term" value="P:positive regulation of long-term synaptic depression"/>
    <property type="evidence" value="ECO:0000315"/>
    <property type="project" value="RGD"/>
</dbReference>
<dbReference type="GO" id="GO:0051965">
    <property type="term" value="P:positive regulation of synapse assembly"/>
    <property type="evidence" value="ECO:0000315"/>
    <property type="project" value="RGD"/>
</dbReference>
<dbReference type="GO" id="GO:0035418">
    <property type="term" value="P:protein localization to synapse"/>
    <property type="evidence" value="ECO:0000318"/>
    <property type="project" value="GO_Central"/>
</dbReference>
<dbReference type="GO" id="GO:0032956">
    <property type="term" value="P:regulation of actin cytoskeleton organization"/>
    <property type="evidence" value="ECO:0000315"/>
    <property type="project" value="RGD"/>
</dbReference>
<dbReference type="GO" id="GO:0051489">
    <property type="term" value="P:regulation of filopodium assembly"/>
    <property type="evidence" value="ECO:0000315"/>
    <property type="project" value="RGD"/>
</dbReference>
<dbReference type="CDD" id="cd19882">
    <property type="entry name" value="DSRM_STAU2_rpt2"/>
    <property type="match status" value="1"/>
</dbReference>
<dbReference type="CDD" id="cd19884">
    <property type="entry name" value="DSRM_STAU2_rpt3"/>
    <property type="match status" value="1"/>
</dbReference>
<dbReference type="CDD" id="cd19886">
    <property type="entry name" value="DSRM_STAU2_rpt4"/>
    <property type="match status" value="1"/>
</dbReference>
<dbReference type="FunFam" id="3.30.160.20:FF:000007">
    <property type="entry name" value="Double-stranded RNA-binding protein Staufen homolog 1"/>
    <property type="match status" value="1"/>
</dbReference>
<dbReference type="FunFam" id="3.30.160.20:FF:000024">
    <property type="entry name" value="double-stranded RNA-binding protein Staufen homolog 1 isoform X1"/>
    <property type="match status" value="1"/>
</dbReference>
<dbReference type="FunFam" id="3.30.160.20:FF:000057">
    <property type="entry name" value="Double-stranded RNA-binding protein Staufen homolog 2"/>
    <property type="match status" value="1"/>
</dbReference>
<dbReference type="FunFam" id="3.30.160.20:FF:000013">
    <property type="entry name" value="double-stranded RNA-binding protein Staufen homolog 2 isoform X3"/>
    <property type="match status" value="1"/>
</dbReference>
<dbReference type="Gene3D" id="3.30.160.20">
    <property type="match status" value="4"/>
</dbReference>
<dbReference type="InterPro" id="IPR051740">
    <property type="entry name" value="DRBM-containing_protein"/>
</dbReference>
<dbReference type="InterPro" id="IPR014720">
    <property type="entry name" value="dsRBD_dom"/>
</dbReference>
<dbReference type="InterPro" id="IPR044464">
    <property type="entry name" value="STAU2_DSRM_2"/>
</dbReference>
<dbReference type="InterPro" id="IPR044473">
    <property type="entry name" value="STAU2_DSRM_3"/>
</dbReference>
<dbReference type="InterPro" id="IPR044474">
    <property type="entry name" value="STAU2_DSRM_4"/>
</dbReference>
<dbReference type="InterPro" id="IPR032478">
    <property type="entry name" value="Staufen_C"/>
</dbReference>
<dbReference type="PANTHER" id="PTHR46054:SF1">
    <property type="entry name" value="DOUBLE-STRANDED RNA-BINDING PROTEIN STAUFEN HOMOLOG 2"/>
    <property type="match status" value="1"/>
</dbReference>
<dbReference type="PANTHER" id="PTHR46054">
    <property type="entry name" value="MATERNAL EFFECT PROTEIN STAUFEN"/>
    <property type="match status" value="1"/>
</dbReference>
<dbReference type="Pfam" id="PF00035">
    <property type="entry name" value="dsrm"/>
    <property type="match status" value="4"/>
</dbReference>
<dbReference type="Pfam" id="PF16482">
    <property type="entry name" value="Staufen_C"/>
    <property type="match status" value="1"/>
</dbReference>
<dbReference type="SMART" id="SM00358">
    <property type="entry name" value="DSRM"/>
    <property type="match status" value="4"/>
</dbReference>
<dbReference type="SUPFAM" id="SSF54768">
    <property type="entry name" value="dsRNA-binding domain-like"/>
    <property type="match status" value="4"/>
</dbReference>
<dbReference type="PROSITE" id="PS50137">
    <property type="entry name" value="DS_RBD"/>
    <property type="match status" value="4"/>
</dbReference>
<reference key="1">
    <citation type="journal article" date="2001" name="Neuron">
        <title>A role for a rat homolog of staufen in the transport of RNA to neuronal dendrites.</title>
        <authorList>
            <person name="Tang S.J."/>
            <person name="Meulemans D."/>
            <person name="Vazquez L."/>
            <person name="Colaco N."/>
            <person name="Schuman E."/>
        </authorList>
    </citation>
    <scope>NUCLEOTIDE SEQUENCE [MRNA] (ISOFORMS 1 AND 4)</scope>
    <scope>FUNCTION</scope>
    <scope>INTERACTION WITH MICROTUBULES</scope>
    <scope>DOMAIN FOR DENDRITIC TRANSPORT</scope>
    <scope>TISSUE SPECIFICITY</scope>
    <source>
        <strain>Sprague-Dawley</strain>
    </source>
</reference>
<reference key="2">
    <citation type="journal article" date="2004" name="J. Biol. Chem.">
        <title>Alternative splicing of Staufen2 creates the nuclear export signal for CRM1 (Exportin 1).</title>
        <authorList>
            <person name="Miki T."/>
            <person name="Yoneda Y."/>
        </authorList>
    </citation>
    <scope>NUCLEOTIDE SEQUENCE [MRNA] (ISOFORMS 2 AND 3)</scope>
    <scope>SUBCELLULAR LOCATION</scope>
    <scope>DOMAINS NES (ISOFORMS 2 AND 3) AND NUCLEAR LOCALIZATION SIGNAL</scope>
    <scope>MUTAGENESIS OF PHE-239</scope>
</reference>
<reference key="3">
    <citation type="journal article" date="2004" name="NeuroMolecular Med.">
        <title>The mammalian RNA-binding protein Staufen2 links nuclear and cytoplasmic RNA processing pathways in neurons.</title>
        <authorList>
            <person name="Monshausen M."/>
            <person name="Gehring N.H."/>
            <person name="Kosik K.S."/>
        </authorList>
    </citation>
    <scope>NUCLEOTIDE SEQUENCE [MRNA] (ISOFORMS 1; 2; 3 AND 4)</scope>
    <source>
        <strain>Sprague-Dawley</strain>
    </source>
</reference>
<reference key="4">
    <citation type="journal article" date="2004" name="Genome Res.">
        <title>The status, quality, and expansion of the NIH full-length cDNA project: the Mammalian Gene Collection (MGC).</title>
        <authorList>
            <consortium name="The MGC Project Team"/>
        </authorList>
    </citation>
    <scope>NUCLEOTIDE SEQUENCE [LARGE SCALE MRNA] (ISOFORM 4)</scope>
    <source>
        <tissue>Heart</tissue>
    </source>
</reference>
<reference key="5">
    <citation type="journal article" date="2002" name="J. Cell Sci.">
        <title>Staufen2 isoforms localize to the somatodendritic domain of neurons and interact with different organelles.</title>
        <authorList>
            <person name="Duchaine T.F."/>
            <person name="Hemraj I."/>
            <person name="Furic L."/>
            <person name="Deitinghoff A."/>
            <person name="Kiebler M.A."/>
            <person name="DesGroseillers L."/>
        </authorList>
    </citation>
    <scope>INTERACTION WITH RIBOSOMES</scope>
    <scope>TISSUE SPECIFICITY</scope>
</reference>
<reference key="6">
    <citation type="journal article" date="2003" name="Proc. Natl. Acad. Sci. U.S.A.">
        <title>Isolation and characterization of Staufen-containing ribonucleoprotein particles from rat brain.</title>
        <authorList>
            <person name="Mallardo M."/>
            <person name="Deitinghoff A."/>
            <person name="Mueller J."/>
            <person name="Goetze B."/>
            <person name="Macchi P."/>
            <person name="Peters C."/>
            <person name="Kiebler M.A."/>
        </authorList>
    </citation>
    <scope>IDENTIFICATION WITHIN RIBONUCLEOPROTEIN PARTICLES</scope>
</reference>
<reference key="7">
    <citation type="journal article" date="2005" name="Mol. Biol. Cell">
        <title>Staufen recruitment into stress granules does not affect early mRNA transport in oligodendrocytes.</title>
        <authorList>
            <person name="Thomas M.G."/>
            <person name="Martinez Tosar L.J."/>
            <person name="Loschi M."/>
            <person name="Pasquini J.M."/>
            <person name="Correale J."/>
            <person name="Kindler S."/>
            <person name="Boccaccio G.L."/>
        </authorList>
    </citation>
    <scope>SUBCELLULAR LOCATION</scope>
</reference>
<reference key="8">
    <citation type="journal article" date="2006" name="Proc. Natl. Acad. Sci. U.S.A.">
        <title>Quantitative phosphoproteomics of vasopressin-sensitive renal cells: regulation of aquaporin-2 phosphorylation at two sites.</title>
        <authorList>
            <person name="Hoffert J.D."/>
            <person name="Pisitkun T."/>
            <person name="Wang G."/>
            <person name="Shen R.-F."/>
            <person name="Knepper M.A."/>
        </authorList>
    </citation>
    <scope>PHOSPHORYLATION [LARGE SCALE ANALYSIS] AT SER-9; SER-13; THR-18 AND SER-21 (ISOFORMS 2 AND 3)</scope>
    <scope>IDENTIFICATION BY MASS SPECTROMETRY [LARGE SCALE ANALYSIS]</scope>
</reference>
<accession>Q68SB1</accession>
<accession>Q68SB2</accession>
<accession>Q68SB3</accession>
<accession>Q68SB4</accession>
<accession>Q8R4C9</accession>
<accession>Q8R4D0</accession>
<gene>
    <name type="primary">Stau2</name>
</gene>
<organism>
    <name type="scientific">Rattus norvegicus</name>
    <name type="common">Rat</name>
    <dbReference type="NCBI Taxonomy" id="10116"/>
    <lineage>
        <taxon>Eukaryota</taxon>
        <taxon>Metazoa</taxon>
        <taxon>Chordata</taxon>
        <taxon>Craniata</taxon>
        <taxon>Vertebrata</taxon>
        <taxon>Euteleostomi</taxon>
        <taxon>Mammalia</taxon>
        <taxon>Eutheria</taxon>
        <taxon>Euarchontoglires</taxon>
        <taxon>Glires</taxon>
        <taxon>Rodentia</taxon>
        <taxon>Myomorpha</taxon>
        <taxon>Muroidea</taxon>
        <taxon>Muridae</taxon>
        <taxon>Murinae</taxon>
        <taxon>Rattus</taxon>
    </lineage>
</organism>
<comment type="function">
    <text evidence="5">RNA-binding protein required for the microtubule-dependent transport of neuronal RNA from the cell body to the dendrite. As protein synthesis occurs within the dendrite, the localization of specific mRNAs to dendrites may be a prerequisite for neurite outgrowth and plasticity at sites distant from the cell body.</text>
</comment>
<comment type="subunit">
    <text evidence="2 5 6">Identified in a mRNP complex, at least composed of DHX9, DDX3X, ELAVL1, HNRNPU, IGF2BP1, ILF3, PABPC1, PCBP2, PTBP2, STAU1, STAU2, SYNCRIP and YBX1. Interacts with the exportin XPO5. This requires RNA and RAN bound to GTP (By similarity). Interacts with microtubules. Isoform 2 and isoform 3 may also interact with ribosomes, and this association is independent of translation. Interacts with TRIM71 (via NHL repeats) in an RNA-dependent manner (By similarity).</text>
</comment>
<comment type="subcellular location">
    <subcellularLocation>
        <location>Nucleus</location>
        <location>Nucleolus</location>
    </subcellularLocation>
    <subcellularLocation>
        <location>Nucleus</location>
    </subcellularLocation>
    <subcellularLocation>
        <location>Cytoplasm</location>
    </subcellularLocation>
    <subcellularLocation>
        <location>Endoplasmic reticulum</location>
    </subcellularLocation>
    <text>Shuttles between the nucleolus, nucleus and the cytoplasm. Nuclear export of isoform 1 is independent of XPO1/CRM1 and may require the exportin XPO5. Nuclear export of isoform 2 and isoform 3 can occur by both XPO1/CRM1-dependent and XPO1/CRM1-independent pathways. Found in large cytoplasmic ribonucleoprotein (RNP) granules which are present in the actin rich regions of myelinating processes and associated with microtubules, polysomes and the endoplasmic reticulum. Also recruited to stress granules (SGs) upon inhibition of translation or oxidative stress. These structures are thought to harbor housekeeping mRNAs when translation is aborted.</text>
</comment>
<comment type="alternative products">
    <event type="alternative splicing"/>
    <isoform>
        <id>Q68SB1-1</id>
        <name>1</name>
        <name>LL</name>
        <name>A</name>
        <sequence type="displayed"/>
    </isoform>
    <isoform>
        <id>Q68SB1-2</id>
        <name>2</name>
        <name>SL</name>
        <sequence type="described" ref="VSP_015385 VSP_015386"/>
    </isoform>
    <isoform>
        <id>Q68SB1-3</id>
        <name>3</name>
        <name>SS</name>
        <sequence type="described" ref="VSP_015385 VSP_015386 VSP_015387 VSP_015388"/>
    </isoform>
    <isoform>
        <id>Q68SB1-4</id>
        <name>4</name>
        <name>LS</name>
        <name>B</name>
        <sequence type="described" ref="VSP_015387 VSP_015388"/>
    </isoform>
</comment>
<comment type="tissue specificity">
    <text evidence="5 6">Expressed in both somata and dendrites of hippocampal neurons.</text>
</comment>
<comment type="domain">
    <text evidence="1 5">The DRBM 3 domain appears to be the major RNA-binding determinant (By similarity). This domain also mediates interaction with XPO5 and is required for XPO1/CRM1-independent nuclear export.</text>
</comment>
<comment type="miscellaneous">
    <molecule>Isoform 2</molecule>
    <text evidence="12">XPO1/CRM1-dependent nuclear export is mediated by residues 4-14 and is abrogated by mutagenesis of Ile-4 or Leu-12.</text>
</comment>
<comment type="miscellaneous">
    <molecule>Isoform 3</molecule>
    <text evidence="12">XPO1/CRM1-dependent nuclear export is mediated by residues 4-14 and is abrogated by mutagenesis of Ile-4 or Leu-12.</text>
</comment>
<protein>
    <recommendedName>
        <fullName>Double-stranded RNA-binding protein Staufen homolog 2</fullName>
        <shortName>r-staufen protein</shortName>
    </recommendedName>
</protein>
<name>STAU2_RAT</name>
<sequence length="571" mass="62681">MANPKEKTPMCLVNELARFHSIQPQYKLLNESGPAHSKMFSVQLSLGEQTWESEGSSIKKAQQAVANKALTESTLPKPVQKPPKSNVNNNPGSITPTVELNGLAMKRGEPAIYRPLDPKPFPNYRANYNFRGMYNQRYHCPMPKIFYVQLTVGNNEFFGEGKTRQAARHNAAMKALQALQNEPIPEKSPQNGESGKEMDDDKDANKSEISLVFEIALKRNMPVSFEVIKESGPPHMKSFVTRVSVGEFSAEGEGNSKKLSKKRAATTVLQELKKLPPLPVIEKPKLFFKKRPKTIIKAGPEYGQGMNPISRLAQIQQARKEKEPDYVLLSERGMPRRREFVMQVKVGNEVATGTGPNKKIAKKNAAEAMLLQLGYKASTSLQDQLDKTGENKGWSGPKPGFPEPANNTPKGILHLSPDVYQEMEASRHRVTSGTTLGYLSPKDMNQPSSSFFSVESPSPTSSAPAARELLMNGTSPAAEAIGLKGSSPTPPCSSVQPSKQLEYLARIQGFQAALSALKQFSEQGLESIDGVVNVENGSLEKQAKHLREKADNNQANPGSITQDCKKSKSVI</sequence>
<keyword id="KW-0025">Alternative splicing</keyword>
<keyword id="KW-0963">Cytoplasm</keyword>
<keyword id="KW-0256">Endoplasmic reticulum</keyword>
<keyword id="KW-0493">Microtubule</keyword>
<keyword id="KW-0539">Nucleus</keyword>
<keyword id="KW-0597">Phosphoprotein</keyword>
<keyword id="KW-1185">Reference proteome</keyword>
<keyword id="KW-0677">Repeat</keyword>
<keyword id="KW-0694">RNA-binding</keyword>
<keyword id="KW-0813">Transport</keyword>